<accession>Q7M8Y8</accession>
<gene>
    <name evidence="1" type="primary">pheT</name>
    <name type="ordered locus">WS1308</name>
</gene>
<dbReference type="EC" id="6.1.1.20" evidence="1"/>
<dbReference type="EMBL" id="BX571660">
    <property type="protein sequence ID" value="CAE10384.1"/>
    <property type="molecule type" value="Genomic_DNA"/>
</dbReference>
<dbReference type="RefSeq" id="WP_011139170.1">
    <property type="nucleotide sequence ID" value="NC_005090.1"/>
</dbReference>
<dbReference type="SMR" id="Q7M8Y8"/>
<dbReference type="STRING" id="273121.WS1308"/>
<dbReference type="KEGG" id="wsu:WS1308"/>
<dbReference type="eggNOG" id="COG0072">
    <property type="taxonomic scope" value="Bacteria"/>
</dbReference>
<dbReference type="eggNOG" id="COG0073">
    <property type="taxonomic scope" value="Bacteria"/>
</dbReference>
<dbReference type="HOGENOM" id="CLU_016891_2_1_7"/>
<dbReference type="Proteomes" id="UP000000422">
    <property type="component" value="Chromosome"/>
</dbReference>
<dbReference type="GO" id="GO:0009328">
    <property type="term" value="C:phenylalanine-tRNA ligase complex"/>
    <property type="evidence" value="ECO:0007669"/>
    <property type="project" value="TreeGrafter"/>
</dbReference>
<dbReference type="GO" id="GO:0005524">
    <property type="term" value="F:ATP binding"/>
    <property type="evidence" value="ECO:0007669"/>
    <property type="project" value="UniProtKB-UniRule"/>
</dbReference>
<dbReference type="GO" id="GO:0000287">
    <property type="term" value="F:magnesium ion binding"/>
    <property type="evidence" value="ECO:0007669"/>
    <property type="project" value="UniProtKB-UniRule"/>
</dbReference>
<dbReference type="GO" id="GO:0004826">
    <property type="term" value="F:phenylalanine-tRNA ligase activity"/>
    <property type="evidence" value="ECO:0007669"/>
    <property type="project" value="UniProtKB-UniRule"/>
</dbReference>
<dbReference type="GO" id="GO:0000049">
    <property type="term" value="F:tRNA binding"/>
    <property type="evidence" value="ECO:0007669"/>
    <property type="project" value="UniProtKB-KW"/>
</dbReference>
<dbReference type="GO" id="GO:0006432">
    <property type="term" value="P:phenylalanyl-tRNA aminoacylation"/>
    <property type="evidence" value="ECO:0007669"/>
    <property type="project" value="UniProtKB-UniRule"/>
</dbReference>
<dbReference type="CDD" id="cd00769">
    <property type="entry name" value="PheRS_beta_core"/>
    <property type="match status" value="1"/>
</dbReference>
<dbReference type="CDD" id="cd02796">
    <property type="entry name" value="tRNA_bind_bactPheRS"/>
    <property type="match status" value="1"/>
</dbReference>
<dbReference type="FunFam" id="2.40.50.140:FF:000045">
    <property type="entry name" value="Phenylalanine--tRNA ligase beta subunit"/>
    <property type="match status" value="1"/>
</dbReference>
<dbReference type="Gene3D" id="3.30.56.10">
    <property type="match status" value="2"/>
</dbReference>
<dbReference type="Gene3D" id="3.30.930.10">
    <property type="entry name" value="Bira Bifunctional Protein, Domain 2"/>
    <property type="match status" value="1"/>
</dbReference>
<dbReference type="Gene3D" id="3.30.70.380">
    <property type="entry name" value="Ferrodoxin-fold anticodon-binding domain"/>
    <property type="match status" value="1"/>
</dbReference>
<dbReference type="Gene3D" id="2.40.50.140">
    <property type="entry name" value="Nucleic acid-binding proteins"/>
    <property type="match status" value="1"/>
</dbReference>
<dbReference type="HAMAP" id="MF_00283">
    <property type="entry name" value="Phe_tRNA_synth_beta1"/>
    <property type="match status" value="1"/>
</dbReference>
<dbReference type="InterPro" id="IPR045864">
    <property type="entry name" value="aa-tRNA-synth_II/BPL/LPL"/>
</dbReference>
<dbReference type="InterPro" id="IPR009061">
    <property type="entry name" value="DNA-bd_dom_put_sf"/>
</dbReference>
<dbReference type="InterPro" id="IPR005121">
    <property type="entry name" value="Fdx_antiC-bd"/>
</dbReference>
<dbReference type="InterPro" id="IPR036690">
    <property type="entry name" value="Fdx_antiC-bd_sf"/>
</dbReference>
<dbReference type="InterPro" id="IPR012340">
    <property type="entry name" value="NA-bd_OB-fold"/>
</dbReference>
<dbReference type="InterPro" id="IPR045060">
    <property type="entry name" value="Phe-tRNA-ligase_IIc_bsu"/>
</dbReference>
<dbReference type="InterPro" id="IPR004532">
    <property type="entry name" value="Phe-tRNA-ligase_IIc_bsu_bact"/>
</dbReference>
<dbReference type="InterPro" id="IPR041616">
    <property type="entry name" value="PheRS_beta_core"/>
</dbReference>
<dbReference type="InterPro" id="IPR002547">
    <property type="entry name" value="tRNA-bd_dom"/>
</dbReference>
<dbReference type="InterPro" id="IPR033714">
    <property type="entry name" value="tRNA_bind_bactPheRS"/>
</dbReference>
<dbReference type="InterPro" id="IPR005147">
    <property type="entry name" value="tRNA_synthase_B5-dom"/>
</dbReference>
<dbReference type="NCBIfam" id="TIGR00472">
    <property type="entry name" value="pheT_bact"/>
    <property type="match status" value="1"/>
</dbReference>
<dbReference type="NCBIfam" id="NF045760">
    <property type="entry name" value="YtpR"/>
    <property type="match status" value="1"/>
</dbReference>
<dbReference type="PANTHER" id="PTHR10947:SF0">
    <property type="entry name" value="PHENYLALANINE--TRNA LIGASE BETA SUBUNIT"/>
    <property type="match status" value="1"/>
</dbReference>
<dbReference type="PANTHER" id="PTHR10947">
    <property type="entry name" value="PHENYLALANYL-TRNA SYNTHETASE BETA CHAIN AND LEUCINE-RICH REPEAT-CONTAINING PROTEIN 47"/>
    <property type="match status" value="1"/>
</dbReference>
<dbReference type="Pfam" id="PF03484">
    <property type="entry name" value="B5"/>
    <property type="match status" value="1"/>
</dbReference>
<dbReference type="Pfam" id="PF03147">
    <property type="entry name" value="FDX-ACB"/>
    <property type="match status" value="1"/>
</dbReference>
<dbReference type="Pfam" id="PF01588">
    <property type="entry name" value="tRNA_bind"/>
    <property type="match status" value="1"/>
</dbReference>
<dbReference type="Pfam" id="PF17759">
    <property type="entry name" value="tRNA_synthFbeta"/>
    <property type="match status" value="1"/>
</dbReference>
<dbReference type="SMART" id="SM00874">
    <property type="entry name" value="B5"/>
    <property type="match status" value="1"/>
</dbReference>
<dbReference type="SMART" id="SM00896">
    <property type="entry name" value="FDX-ACB"/>
    <property type="match status" value="1"/>
</dbReference>
<dbReference type="SUPFAM" id="SSF54991">
    <property type="entry name" value="Anticodon-binding domain of PheRS"/>
    <property type="match status" value="1"/>
</dbReference>
<dbReference type="SUPFAM" id="SSF55681">
    <property type="entry name" value="Class II aaRS and biotin synthetases"/>
    <property type="match status" value="1"/>
</dbReference>
<dbReference type="SUPFAM" id="SSF50249">
    <property type="entry name" value="Nucleic acid-binding proteins"/>
    <property type="match status" value="1"/>
</dbReference>
<dbReference type="SUPFAM" id="SSF46955">
    <property type="entry name" value="Putative DNA-binding domain"/>
    <property type="match status" value="1"/>
</dbReference>
<dbReference type="PROSITE" id="PS51483">
    <property type="entry name" value="B5"/>
    <property type="match status" value="1"/>
</dbReference>
<dbReference type="PROSITE" id="PS51447">
    <property type="entry name" value="FDX_ACB"/>
    <property type="match status" value="1"/>
</dbReference>
<dbReference type="PROSITE" id="PS50886">
    <property type="entry name" value="TRBD"/>
    <property type="match status" value="1"/>
</dbReference>
<keyword id="KW-0030">Aminoacyl-tRNA synthetase</keyword>
<keyword id="KW-0067">ATP-binding</keyword>
<keyword id="KW-0963">Cytoplasm</keyword>
<keyword id="KW-0436">Ligase</keyword>
<keyword id="KW-0460">Magnesium</keyword>
<keyword id="KW-0479">Metal-binding</keyword>
<keyword id="KW-0547">Nucleotide-binding</keyword>
<keyword id="KW-0648">Protein biosynthesis</keyword>
<keyword id="KW-1185">Reference proteome</keyword>
<keyword id="KW-0694">RNA-binding</keyword>
<keyword id="KW-0820">tRNA-binding</keyword>
<evidence type="ECO:0000255" key="1">
    <source>
        <dbReference type="HAMAP-Rule" id="MF_00283"/>
    </source>
</evidence>
<reference key="1">
    <citation type="journal article" date="2003" name="Proc. Natl. Acad. Sci. U.S.A.">
        <title>Complete genome sequence and analysis of Wolinella succinogenes.</title>
        <authorList>
            <person name="Baar C."/>
            <person name="Eppinger M."/>
            <person name="Raddatz G."/>
            <person name="Simon J."/>
            <person name="Lanz C."/>
            <person name="Klimmek O."/>
            <person name="Nandakumar R."/>
            <person name="Gross R."/>
            <person name="Rosinus A."/>
            <person name="Keller H."/>
            <person name="Jagtap P."/>
            <person name="Linke B."/>
            <person name="Meyer F."/>
            <person name="Lederer H."/>
            <person name="Schuster S.C."/>
        </authorList>
    </citation>
    <scope>NUCLEOTIDE SEQUENCE [LARGE SCALE GENOMIC DNA]</scope>
    <source>
        <strain>ATCC 29543 / DSM 1740 / CCUG 13145 / JCM 31913 / LMG 7466 / NCTC 11488 / FDC 602W</strain>
    </source>
</reference>
<feature type="chain" id="PRO_0000232831" description="Phenylalanine--tRNA ligase beta subunit">
    <location>
        <begin position="1"/>
        <end position="786"/>
    </location>
</feature>
<feature type="domain" description="tRNA-binding" evidence="1">
    <location>
        <begin position="39"/>
        <end position="150"/>
    </location>
</feature>
<feature type="domain" description="B5" evidence="1">
    <location>
        <begin position="397"/>
        <end position="474"/>
    </location>
</feature>
<feature type="domain" description="FDX-ACB" evidence="1">
    <location>
        <begin position="693"/>
        <end position="786"/>
    </location>
</feature>
<feature type="binding site" evidence="1">
    <location>
        <position position="452"/>
    </location>
    <ligand>
        <name>Mg(2+)</name>
        <dbReference type="ChEBI" id="CHEBI:18420"/>
        <note>shared with alpha subunit</note>
    </ligand>
</feature>
<feature type="binding site" evidence="1">
    <location>
        <position position="458"/>
    </location>
    <ligand>
        <name>Mg(2+)</name>
        <dbReference type="ChEBI" id="CHEBI:18420"/>
        <note>shared with alpha subunit</note>
    </ligand>
</feature>
<feature type="binding site" evidence="1">
    <location>
        <position position="461"/>
    </location>
    <ligand>
        <name>Mg(2+)</name>
        <dbReference type="ChEBI" id="CHEBI:18420"/>
        <note>shared with alpha subunit</note>
    </ligand>
</feature>
<feature type="binding site" evidence="1">
    <location>
        <position position="462"/>
    </location>
    <ligand>
        <name>Mg(2+)</name>
        <dbReference type="ChEBI" id="CHEBI:18420"/>
        <note>shared with alpha subunit</note>
    </ligand>
</feature>
<name>SYFB_WOLSU</name>
<comment type="catalytic activity">
    <reaction evidence="1">
        <text>tRNA(Phe) + L-phenylalanine + ATP = L-phenylalanyl-tRNA(Phe) + AMP + diphosphate + H(+)</text>
        <dbReference type="Rhea" id="RHEA:19413"/>
        <dbReference type="Rhea" id="RHEA-COMP:9668"/>
        <dbReference type="Rhea" id="RHEA-COMP:9699"/>
        <dbReference type="ChEBI" id="CHEBI:15378"/>
        <dbReference type="ChEBI" id="CHEBI:30616"/>
        <dbReference type="ChEBI" id="CHEBI:33019"/>
        <dbReference type="ChEBI" id="CHEBI:58095"/>
        <dbReference type="ChEBI" id="CHEBI:78442"/>
        <dbReference type="ChEBI" id="CHEBI:78531"/>
        <dbReference type="ChEBI" id="CHEBI:456215"/>
        <dbReference type="EC" id="6.1.1.20"/>
    </reaction>
</comment>
<comment type="cofactor">
    <cofactor evidence="1">
        <name>Mg(2+)</name>
        <dbReference type="ChEBI" id="CHEBI:18420"/>
    </cofactor>
    <text evidence="1">Binds 2 magnesium ions per tetramer.</text>
</comment>
<comment type="subunit">
    <text evidence="1">Tetramer of two alpha and two beta subunits.</text>
</comment>
<comment type="subcellular location">
    <subcellularLocation>
        <location evidence="1">Cytoplasm</location>
    </subcellularLocation>
</comment>
<comment type="similarity">
    <text evidence="1">Belongs to the phenylalanyl-tRNA synthetase beta subunit family. Type 1 subfamily.</text>
</comment>
<sequence>MIFTKSLINPFVHLSAIPTQRIYKTLNDIGLEVDSFHSLRAPDRVVVGKVLECEKHPDADKLNVCQVDIGEERRQIVCGAKNVAAGQWVAVALEGAKISDTLTIKKAKLRGIESQGMICSSSELGFPKLNEGIMILDSSIGELKLGKPLHEYPLFSDDIFEIDITPNRGDCLSLYGVARELAAAYDLDFSEYPKEQEEDNVLGIGRLLQVSHEGKLDSSLLYKTVQLNELKLPLSIALTLAYNDLLGESVLQNFIQYATLVSGVSIKAYRHDACLPASTSDEKPLKASIMIKKDENGLESVYAGEKKLSTIGVSQNRETMPLDAPEVVILEASYTPPAIISEGVARSKVEKETRFFYRASRGSNPHLPSGITLLCSALHKMGGALIYSGTHEITQNYKPATITVDLHSLSAFIGQEVPKTKVVSLLKSLKFEVDLASDDSFLAIRPPLFRHDIHNKQDIAEEIVRLLGIDTILAKPLYFAEKRRTDEEYILYKHHRSLAKRAMVAGFNETIHFVFNQKSRLKEWGYTTIDESVDLLNPITSELDTLRPTLLLSLLDSVVRNKNLGYSQIALFEMGSTYTAARQERFSLAFVASGLKKEAIYPYPKGEKWSLFGFAEEIASVIGEFSLEQRAPQSEKLFHPAQCAYIIQKGERIGTIAKLHPLAQEAFDLEETFVAEIDLEALKPSLIQAQSFSKFPKLQRDLTVLIGKNHPFSALRQEIKKLGIIEIKELFPLDIYTDEKIDEEQISLTIRLLIQSDSKTLEEEEIVSITQKVLDLLNHRFGAKLR</sequence>
<organism>
    <name type="scientific">Wolinella succinogenes (strain ATCC 29543 / DSM 1740 / CCUG 13145 / JCM 31913 / LMG 7466 / NCTC 11488 / FDC 602W)</name>
    <name type="common">Vibrio succinogenes</name>
    <dbReference type="NCBI Taxonomy" id="273121"/>
    <lineage>
        <taxon>Bacteria</taxon>
        <taxon>Pseudomonadati</taxon>
        <taxon>Campylobacterota</taxon>
        <taxon>Epsilonproteobacteria</taxon>
        <taxon>Campylobacterales</taxon>
        <taxon>Helicobacteraceae</taxon>
        <taxon>Wolinella</taxon>
    </lineage>
</organism>
<protein>
    <recommendedName>
        <fullName evidence="1">Phenylalanine--tRNA ligase beta subunit</fullName>
        <ecNumber evidence="1">6.1.1.20</ecNumber>
    </recommendedName>
    <alternativeName>
        <fullName evidence="1">Phenylalanyl-tRNA synthetase beta subunit</fullName>
        <shortName evidence="1">PheRS</shortName>
    </alternativeName>
</protein>
<proteinExistence type="inferred from homology"/>